<sequence length="222" mass="23347">MKRTKSIHHASFRKSWSARHLTPVALAVTAVFMLAGCEKSDETVSLYQNADDCSAANPGKNAECTTAFNNALKEAERTAPKYATREDCVAEFGEGQCQQAPAQAGMAPENQAQAQSSGSFWMPLMAGYMMGRMMGGGAGFAQQPLFSSKNPASPAYGKYTDASGKNYGAAQPGRTMTVPKTAMAPKPATTTTVTRGGFGESVAKQSTMQRSATGTSNRSMGG</sequence>
<comment type="similarity">
    <text evidence="1">Belongs to the UPF0441 family.</text>
</comment>
<name>Y4429_CITK8</name>
<evidence type="ECO:0000255" key="1">
    <source>
        <dbReference type="HAMAP-Rule" id="MF_01188"/>
    </source>
</evidence>
<evidence type="ECO:0000256" key="2">
    <source>
        <dbReference type="SAM" id="MobiDB-lite"/>
    </source>
</evidence>
<feature type="chain" id="PRO_1000065862" description="UPF0441 protein CKO_04429">
    <location>
        <begin position="1"/>
        <end position="222"/>
    </location>
</feature>
<feature type="region of interest" description="Disordered" evidence="2">
    <location>
        <begin position="177"/>
        <end position="222"/>
    </location>
</feature>
<feature type="compositionally biased region" description="Low complexity" evidence="2">
    <location>
        <begin position="177"/>
        <end position="194"/>
    </location>
</feature>
<feature type="compositionally biased region" description="Polar residues" evidence="2">
    <location>
        <begin position="203"/>
        <end position="222"/>
    </location>
</feature>
<gene>
    <name type="ordered locus">CKO_04429</name>
</gene>
<dbReference type="EMBL" id="CP000822">
    <property type="protein sequence ID" value="ABV15485.1"/>
    <property type="molecule type" value="Genomic_DNA"/>
</dbReference>
<dbReference type="RefSeq" id="WP_012135168.1">
    <property type="nucleotide sequence ID" value="NC_009792.1"/>
</dbReference>
<dbReference type="STRING" id="290338.CKO_04429"/>
<dbReference type="GeneID" id="45138004"/>
<dbReference type="KEGG" id="cko:CKO_04429"/>
<dbReference type="HOGENOM" id="CLU_095624_0_0_6"/>
<dbReference type="OrthoDB" id="5903948at2"/>
<dbReference type="Proteomes" id="UP000008148">
    <property type="component" value="Chromosome"/>
</dbReference>
<dbReference type="HAMAP" id="MF_01188">
    <property type="entry name" value="UPF0441"/>
    <property type="match status" value="1"/>
</dbReference>
<dbReference type="InterPro" id="IPR009576">
    <property type="entry name" value="Biofilm_formation_YgiB"/>
</dbReference>
<dbReference type="NCBIfam" id="NF008655">
    <property type="entry name" value="PRK11653.1"/>
    <property type="match status" value="1"/>
</dbReference>
<dbReference type="Pfam" id="PF06693">
    <property type="entry name" value="DUF1190"/>
    <property type="match status" value="1"/>
</dbReference>
<reference key="1">
    <citation type="submission" date="2007-08" db="EMBL/GenBank/DDBJ databases">
        <authorList>
            <consortium name="The Citrobacter koseri Genome Sequencing Project"/>
            <person name="McClelland M."/>
            <person name="Sanderson E.K."/>
            <person name="Porwollik S."/>
            <person name="Spieth J."/>
            <person name="Clifton W.S."/>
            <person name="Latreille P."/>
            <person name="Courtney L."/>
            <person name="Wang C."/>
            <person name="Pepin K."/>
            <person name="Bhonagiri V."/>
            <person name="Nash W."/>
            <person name="Johnson M."/>
            <person name="Thiruvilangam P."/>
            <person name="Wilson R."/>
        </authorList>
    </citation>
    <scope>NUCLEOTIDE SEQUENCE [LARGE SCALE GENOMIC DNA]</scope>
    <source>
        <strain>ATCC BAA-895 / CDC 4225-83 / SGSC4696</strain>
    </source>
</reference>
<proteinExistence type="inferred from homology"/>
<protein>
    <recommendedName>
        <fullName evidence="1">UPF0441 protein CKO_04429</fullName>
    </recommendedName>
</protein>
<keyword id="KW-1185">Reference proteome</keyword>
<accession>A8APS2</accession>
<organism>
    <name type="scientific">Citrobacter koseri (strain ATCC BAA-895 / CDC 4225-83 / SGSC4696)</name>
    <dbReference type="NCBI Taxonomy" id="290338"/>
    <lineage>
        <taxon>Bacteria</taxon>
        <taxon>Pseudomonadati</taxon>
        <taxon>Pseudomonadota</taxon>
        <taxon>Gammaproteobacteria</taxon>
        <taxon>Enterobacterales</taxon>
        <taxon>Enterobacteriaceae</taxon>
        <taxon>Citrobacter</taxon>
    </lineage>
</organism>